<organism>
    <name type="scientific">Rattus norvegicus</name>
    <name type="common">Rat</name>
    <dbReference type="NCBI Taxonomy" id="10116"/>
    <lineage>
        <taxon>Eukaryota</taxon>
        <taxon>Metazoa</taxon>
        <taxon>Chordata</taxon>
        <taxon>Craniata</taxon>
        <taxon>Vertebrata</taxon>
        <taxon>Euteleostomi</taxon>
        <taxon>Mammalia</taxon>
        <taxon>Eutheria</taxon>
        <taxon>Euarchontoglires</taxon>
        <taxon>Glires</taxon>
        <taxon>Rodentia</taxon>
        <taxon>Myomorpha</taxon>
        <taxon>Muroidea</taxon>
        <taxon>Muridae</taxon>
        <taxon>Murinae</taxon>
        <taxon>Rattus</taxon>
    </lineage>
</organism>
<accession>Q5I0J9</accession>
<evidence type="ECO:0000250" key="1">
    <source>
        <dbReference type="UniProtKB" id="A6ND91"/>
    </source>
</evidence>
<evidence type="ECO:0000305" key="2"/>
<evidence type="ECO:0000312" key="3">
    <source>
        <dbReference type="RGD" id="1310111"/>
    </source>
</evidence>
<protein>
    <recommendedName>
        <fullName evidence="2">Aspartate dehydrogenase domain-containing protein</fullName>
    </recommendedName>
</protein>
<proteinExistence type="evidence at transcript level"/>
<sequence>MDASMVPRVPHKVGVVGYGRLGQSLVSRLLAQGSELGLELVFVWNRDPGRMAGSVPPALQLEDLTTLEERHPDLVVEVAHPKIIHESGVQILRHANLLVGSPSALADQTTERQLLEASNHWGHTVFVARGALWGCEDISRLDAAGGLQSLRVTMATHPDGFRLEGPLAAAHSSGPRTVLYEGPVRGLCPLAPRNSNTMAAAALAAPSLGFDRVIGVLVADLSLTDMHVVDVELTGPQGPQAAALPCTPTERTQPSLALSLAPLLLQPSGTAYWAAVSFPPDLGSASAEFPPLPLLSP</sequence>
<feature type="chain" id="PRO_0000144902" description="Aspartate dehydrogenase domain-containing protein">
    <location>
        <begin position="1"/>
        <end position="297"/>
    </location>
</feature>
<feature type="modified residue" description="Phosphoserine" evidence="1">
    <location>
        <position position="24"/>
    </location>
</feature>
<feature type="modified residue" description="Phosphoserine" evidence="1">
    <location>
        <position position="172"/>
    </location>
</feature>
<gene>
    <name evidence="3" type="primary">Aspdh</name>
</gene>
<keyword id="KW-0597">Phosphoprotein</keyword>
<keyword id="KW-1185">Reference proteome</keyword>
<name>ASPDH_RAT</name>
<dbReference type="EMBL" id="BC088252">
    <property type="protein sequence ID" value="AAH88252.1"/>
    <property type="molecule type" value="mRNA"/>
</dbReference>
<dbReference type="RefSeq" id="NP_001009643.2">
    <property type="nucleotide sequence ID" value="NM_001009643.2"/>
</dbReference>
<dbReference type="SMR" id="Q5I0J9"/>
<dbReference type="FunCoup" id="Q5I0J9">
    <property type="interactions" value="183"/>
</dbReference>
<dbReference type="STRING" id="10116.ENSRNOP00000073291"/>
<dbReference type="PhosphoSitePlus" id="Q5I0J9"/>
<dbReference type="PaxDb" id="10116-ENSRNOP00000063826"/>
<dbReference type="GeneID" id="292875"/>
<dbReference type="KEGG" id="rno:292875"/>
<dbReference type="UCSC" id="RGD:1310111">
    <property type="organism name" value="rat"/>
</dbReference>
<dbReference type="AGR" id="RGD:1310111"/>
<dbReference type="CTD" id="554235"/>
<dbReference type="RGD" id="1310111">
    <property type="gene designation" value="Aspdh"/>
</dbReference>
<dbReference type="VEuPathDB" id="HostDB:ENSRNOG00000019424"/>
<dbReference type="eggNOG" id="ENOG502QVGC">
    <property type="taxonomic scope" value="Eukaryota"/>
</dbReference>
<dbReference type="InParanoid" id="Q5I0J9"/>
<dbReference type="PhylomeDB" id="Q5I0J9"/>
<dbReference type="TreeFam" id="TF315092"/>
<dbReference type="PRO" id="PR:Q5I0J9"/>
<dbReference type="Proteomes" id="UP000002494">
    <property type="component" value="Chromosome 1"/>
</dbReference>
<dbReference type="Bgee" id="ENSRNOG00000019424">
    <property type="expression patterns" value="Expressed in liver and 10 other cell types or tissues"/>
</dbReference>
<dbReference type="ExpressionAtlas" id="Q5I0J9">
    <property type="expression patterns" value="baseline and differential"/>
</dbReference>
<dbReference type="GO" id="GO:0033735">
    <property type="term" value="F:aspartate dehydrogenase activity"/>
    <property type="evidence" value="ECO:0007669"/>
    <property type="project" value="UniProtKB-EC"/>
</dbReference>
<dbReference type="GO" id="GO:0050661">
    <property type="term" value="F:NADP binding"/>
    <property type="evidence" value="ECO:0007669"/>
    <property type="project" value="InterPro"/>
</dbReference>
<dbReference type="GO" id="GO:0009435">
    <property type="term" value="P:NAD biosynthetic process"/>
    <property type="evidence" value="ECO:0007669"/>
    <property type="project" value="InterPro"/>
</dbReference>
<dbReference type="Gene3D" id="3.30.360.10">
    <property type="entry name" value="Dihydrodipicolinate Reductase, domain 2"/>
    <property type="match status" value="1"/>
</dbReference>
<dbReference type="Gene3D" id="3.40.50.720">
    <property type="entry name" value="NAD(P)-binding Rossmann-like Domain"/>
    <property type="match status" value="1"/>
</dbReference>
<dbReference type="InterPro" id="IPR005106">
    <property type="entry name" value="Asp/hSer_DH_NAD-bd"/>
</dbReference>
<dbReference type="InterPro" id="IPR002811">
    <property type="entry name" value="Asp_DH"/>
</dbReference>
<dbReference type="InterPro" id="IPR036291">
    <property type="entry name" value="NAD(P)-bd_dom_sf"/>
</dbReference>
<dbReference type="PANTHER" id="PTHR31873:SF6">
    <property type="entry name" value="ASPARTATE DEHYDROGENASE DOMAIN-CONTAINING PROTEIN"/>
    <property type="match status" value="1"/>
</dbReference>
<dbReference type="PANTHER" id="PTHR31873">
    <property type="entry name" value="L-ASPARTATE DEHYDROGENASE-RELATED"/>
    <property type="match status" value="1"/>
</dbReference>
<dbReference type="Pfam" id="PF01958">
    <property type="entry name" value="Asp_DH_C"/>
    <property type="match status" value="1"/>
</dbReference>
<dbReference type="Pfam" id="PF03447">
    <property type="entry name" value="NAD_binding_3"/>
    <property type="match status" value="1"/>
</dbReference>
<dbReference type="SUPFAM" id="SSF55347">
    <property type="entry name" value="Glyceraldehyde-3-phosphate dehydrogenase-like, C-terminal domain"/>
    <property type="match status" value="1"/>
</dbReference>
<dbReference type="SUPFAM" id="SSF51735">
    <property type="entry name" value="NAD(P)-binding Rossmann-fold domains"/>
    <property type="match status" value="1"/>
</dbReference>
<comment type="similarity">
    <text evidence="2">Belongs to the L-aspartate dehydrogenase family.</text>
</comment>
<reference key="1">
    <citation type="journal article" date="2004" name="Genome Res.">
        <title>The status, quality, and expansion of the NIH full-length cDNA project: the Mammalian Gene Collection (MGC).</title>
        <authorList>
            <consortium name="The MGC Project Team"/>
        </authorList>
    </citation>
    <scope>NUCLEOTIDE SEQUENCE [LARGE SCALE MRNA]</scope>
    <source>
        <tissue>Liver</tissue>
    </source>
</reference>